<reference key="1">
    <citation type="journal article" date="2000" name="Nature">
        <title>DNA sequence of both chromosomes of the cholera pathogen Vibrio cholerae.</title>
        <authorList>
            <person name="Heidelberg J.F."/>
            <person name="Eisen J.A."/>
            <person name="Nelson W.C."/>
            <person name="Clayton R.A."/>
            <person name="Gwinn M.L."/>
            <person name="Dodson R.J."/>
            <person name="Haft D.H."/>
            <person name="Hickey E.K."/>
            <person name="Peterson J.D."/>
            <person name="Umayam L.A."/>
            <person name="Gill S.R."/>
            <person name="Nelson K.E."/>
            <person name="Read T.D."/>
            <person name="Tettelin H."/>
            <person name="Richardson D.L."/>
            <person name="Ermolaeva M.D."/>
            <person name="Vamathevan J.J."/>
            <person name="Bass S."/>
            <person name="Qin H."/>
            <person name="Dragoi I."/>
            <person name="Sellers P."/>
            <person name="McDonald L.A."/>
            <person name="Utterback T.R."/>
            <person name="Fleischmann R.D."/>
            <person name="Nierman W.C."/>
            <person name="White O."/>
            <person name="Salzberg S.L."/>
            <person name="Smith H.O."/>
            <person name="Colwell R.R."/>
            <person name="Mekalanos J.J."/>
            <person name="Venter J.C."/>
            <person name="Fraser C.M."/>
        </authorList>
    </citation>
    <scope>NUCLEOTIDE SEQUENCE [LARGE SCALE GENOMIC DNA]</scope>
    <source>
        <strain>ATCC 39315 / El Tor Inaba N16961</strain>
    </source>
</reference>
<evidence type="ECO:0000305" key="1"/>
<keyword id="KW-1185">Reference proteome</keyword>
<name>Y850_VIBCH</name>
<dbReference type="EMBL" id="AE003852">
    <property type="protein sequence ID" value="AAF94012.1"/>
    <property type="status" value="ALT_INIT"/>
    <property type="molecule type" value="Genomic_DNA"/>
</dbReference>
<dbReference type="PIR" id="E82272">
    <property type="entry name" value="E82272"/>
</dbReference>
<dbReference type="RefSeq" id="NP_230497.1">
    <property type="nucleotide sequence ID" value="NC_002505.1"/>
</dbReference>
<dbReference type="RefSeq" id="WP_001918351.1">
    <property type="nucleotide sequence ID" value="NZ_LT906614.1"/>
</dbReference>
<dbReference type="SMR" id="P0C6P8"/>
<dbReference type="STRING" id="243277.VC_0850"/>
<dbReference type="DNASU" id="2614517"/>
<dbReference type="EnsemblBacteria" id="AAF94012">
    <property type="protein sequence ID" value="AAF94012"/>
    <property type="gene ID" value="VC_0850"/>
</dbReference>
<dbReference type="KEGG" id="vch:VC_0850"/>
<dbReference type="PATRIC" id="fig|243277.26.peg.810"/>
<dbReference type="eggNOG" id="COG2914">
    <property type="taxonomic scope" value="Bacteria"/>
</dbReference>
<dbReference type="HOGENOM" id="CLU_150721_1_0_6"/>
<dbReference type="Proteomes" id="UP000000584">
    <property type="component" value="Chromosome 1"/>
</dbReference>
<dbReference type="Gene3D" id="3.10.20.280">
    <property type="entry name" value="RnfH-like"/>
    <property type="match status" value="1"/>
</dbReference>
<dbReference type="HAMAP" id="MF_00460">
    <property type="entry name" value="UPF0125_RnfH"/>
    <property type="match status" value="1"/>
</dbReference>
<dbReference type="InterPro" id="IPR016155">
    <property type="entry name" value="Mopterin_synth/thiamin_S_b"/>
</dbReference>
<dbReference type="InterPro" id="IPR005346">
    <property type="entry name" value="RnfH"/>
</dbReference>
<dbReference type="InterPro" id="IPR037021">
    <property type="entry name" value="RnfH_sf"/>
</dbReference>
<dbReference type="NCBIfam" id="NF002490">
    <property type="entry name" value="PRK01777.1"/>
    <property type="match status" value="1"/>
</dbReference>
<dbReference type="PANTHER" id="PTHR37483">
    <property type="entry name" value="UPF0125 PROTEIN RATB"/>
    <property type="match status" value="1"/>
</dbReference>
<dbReference type="PANTHER" id="PTHR37483:SF1">
    <property type="entry name" value="UPF0125 PROTEIN RATB"/>
    <property type="match status" value="1"/>
</dbReference>
<dbReference type="Pfam" id="PF03658">
    <property type="entry name" value="Ub-RnfH"/>
    <property type="match status" value="1"/>
</dbReference>
<dbReference type="SUPFAM" id="SSF54285">
    <property type="entry name" value="MoaD/ThiS"/>
    <property type="match status" value="1"/>
</dbReference>
<feature type="chain" id="PRO_0000192502" description="UPF0125 protein VC_0850">
    <location>
        <begin position="1"/>
        <end position="101"/>
    </location>
</feature>
<accession>P0C6P8</accession>
<accession>P52120</accession>
<accession>Q9KTQ1</accession>
<gene>
    <name type="ordered locus">VC_0850</name>
</gene>
<sequence length="101" mass="11613">MSSEMIHVEVVYALPHEQRVLKLVVEQSATVEEIIRTSGILQMYPEIDLTVNKVGIFSRNVKLDARVRDKDRIEIYRPLLADPKEIRRKRAEQAKAAANQS</sequence>
<protein>
    <recommendedName>
        <fullName>UPF0125 protein VC_0850</fullName>
    </recommendedName>
</protein>
<comment type="similarity">
    <text evidence="1">Belongs to the UPF0125 (RnfH) family.</text>
</comment>
<comment type="sequence caution" evidence="1">
    <conflict type="erroneous initiation">
        <sequence resource="EMBL-CDS" id="AAF94012"/>
    </conflict>
</comment>
<proteinExistence type="inferred from homology"/>
<organism>
    <name type="scientific">Vibrio cholerae serotype O1 (strain ATCC 39315 / El Tor Inaba N16961)</name>
    <dbReference type="NCBI Taxonomy" id="243277"/>
    <lineage>
        <taxon>Bacteria</taxon>
        <taxon>Pseudomonadati</taxon>
        <taxon>Pseudomonadota</taxon>
        <taxon>Gammaproteobacteria</taxon>
        <taxon>Vibrionales</taxon>
        <taxon>Vibrionaceae</taxon>
        <taxon>Vibrio</taxon>
    </lineage>
</organism>